<feature type="signal peptide" evidence="2">
    <location>
        <begin position="1"/>
        <end position="28"/>
    </location>
</feature>
<feature type="propeptide" id="PRO_0000394771" evidence="19">
    <location>
        <begin position="29"/>
        <end position="83"/>
    </location>
</feature>
<feature type="chain" id="PRO_0000007483" description="Attractin">
    <location>
        <begin position="84"/>
        <end position="1429"/>
    </location>
</feature>
<feature type="topological domain" description="Extracellular" evidence="2">
    <location>
        <begin position="84"/>
        <end position="1279"/>
    </location>
</feature>
<feature type="transmembrane region" description="Helical" evidence="2">
    <location>
        <begin position="1280"/>
        <end position="1300"/>
    </location>
</feature>
<feature type="topological domain" description="Cytoplasmic" evidence="2">
    <location>
        <begin position="1301"/>
        <end position="1429"/>
    </location>
</feature>
<feature type="domain" description="EGF-like" evidence="5">
    <location>
        <begin position="101"/>
        <end position="129"/>
    </location>
</feature>
<feature type="domain" description="CUB" evidence="4">
    <location>
        <begin position="132"/>
        <end position="248"/>
    </location>
</feature>
<feature type="repeat" description="Kelch 1">
    <location>
        <begin position="352"/>
        <end position="402"/>
    </location>
</feature>
<feature type="repeat" description="Kelch 2">
    <location>
        <begin position="404"/>
        <end position="451"/>
    </location>
</feature>
<feature type="repeat" description="Kelch 3">
    <location>
        <begin position="461"/>
        <end position="508"/>
    </location>
</feature>
<feature type="repeat" description="Kelch 4">
    <location>
        <begin position="513"/>
        <end position="564"/>
    </location>
</feature>
<feature type="repeat" description="Kelch 5">
    <location>
        <begin position="566"/>
        <end position="624"/>
    </location>
</feature>
<feature type="repeat" description="Kelch 6">
    <location>
        <begin position="625"/>
        <end position="671"/>
    </location>
</feature>
<feature type="domain" description="PSI 1">
    <location>
        <begin position="703"/>
        <end position="748"/>
    </location>
</feature>
<feature type="domain" description="PSI 2">
    <location>
        <begin position="755"/>
        <end position="794"/>
    </location>
</feature>
<feature type="domain" description="C-type lectin" evidence="3">
    <location>
        <begin position="795"/>
        <end position="919"/>
    </location>
</feature>
<feature type="domain" description="PSI 3">
    <location>
        <begin position="932"/>
        <end position="983"/>
    </location>
</feature>
<feature type="domain" description="PSI 4">
    <location>
        <begin position="986"/>
        <end position="1061"/>
    </location>
</feature>
<feature type="domain" description="Laminin EGF-like 1" evidence="6">
    <location>
        <begin position="1063"/>
        <end position="1108"/>
    </location>
</feature>
<feature type="domain" description="Laminin EGF-like 2" evidence="6">
    <location>
        <begin position="1109"/>
        <end position="1157"/>
    </location>
</feature>
<feature type="glycosylation site" description="N-linked (GlcNAc...) asparagine" evidence="2">
    <location>
        <position position="213"/>
    </location>
</feature>
<feature type="glycosylation site" description="N-linked (GlcNAc...) asparagine" evidence="2">
    <location>
        <position position="237"/>
    </location>
</feature>
<feature type="glycosylation site" description="N-linked (GlcNAc...) asparagine" evidence="2">
    <location>
        <position position="242"/>
    </location>
</feature>
<feature type="glycosylation site" description="N-linked (GlcNAc...) asparagine" evidence="2">
    <location>
        <position position="253"/>
    </location>
</feature>
<feature type="glycosylation site" description="N-linked (GlcNAc...) asparagine" evidence="8 9">
    <location>
        <position position="264"/>
    </location>
</feature>
<feature type="glycosylation site" description="N-linked (GlcNAc...) (complex) asparagine" evidence="9 11">
    <location>
        <position position="300"/>
    </location>
</feature>
<feature type="glycosylation site" description="N-linked (GlcNAc...) asparagine" evidence="2">
    <location>
        <position position="325"/>
    </location>
</feature>
<feature type="glycosylation site" description="N-linked (GlcNAc...) asparagine" evidence="2">
    <location>
        <position position="362"/>
    </location>
</feature>
<feature type="glycosylation site" description="N-linked (GlcNAc...) (complex) asparagine" evidence="8 9 11">
    <location>
        <position position="383"/>
    </location>
</feature>
<feature type="glycosylation site" description="N-linked (GlcNAc...) asparagine" evidence="9 12">
    <location>
        <position position="416"/>
    </location>
</feature>
<feature type="glycosylation site" description="N-linked (GlcNAc...) asparagine" evidence="9">
    <location>
        <position position="428"/>
    </location>
</feature>
<feature type="glycosylation site" description="N-linked (GlcNAc...) asparagine" evidence="9">
    <location>
        <position position="575"/>
    </location>
</feature>
<feature type="glycosylation site" description="N-linked (GlcNAc...) asparagine" evidence="9">
    <location>
        <position position="623"/>
    </location>
</feature>
<feature type="glycosylation site" description="N-linked (GlcNAc...) (complex) asparagine" evidence="8 11">
    <location>
        <position position="731"/>
    </location>
</feature>
<feature type="glycosylation site" description="N-linked (GlcNAc...) asparagine" evidence="2">
    <location>
        <position position="863"/>
    </location>
</feature>
<feature type="glycosylation site" description="N-linked (GlcNAc...) asparagine" evidence="2">
    <location>
        <position position="914"/>
    </location>
</feature>
<feature type="glycosylation site" description="N-linked (GlcNAc...) asparagine" evidence="2">
    <location>
        <position position="923"/>
    </location>
</feature>
<feature type="glycosylation site" description="N-linked (GlcNAc...) asparagine" evidence="2">
    <location>
        <position position="986"/>
    </location>
</feature>
<feature type="glycosylation site" description="N-linked (GlcNAc...) asparagine" evidence="9">
    <location>
        <position position="1043"/>
    </location>
</feature>
<feature type="glycosylation site" description="N-linked (GlcNAc...) asparagine" evidence="2">
    <location>
        <position position="1054"/>
    </location>
</feature>
<feature type="glycosylation site" description="N-linked (GlcNAc...) (complex) asparagine" evidence="11">
    <location>
        <position position="1073"/>
    </location>
</feature>
<feature type="glycosylation site" description="N-linked (GlcNAc...) asparagine" evidence="2">
    <location>
        <position position="1082"/>
    </location>
</feature>
<feature type="glycosylation site" description="N-linked (GlcNAc...) asparagine" evidence="9">
    <location>
        <position position="1198"/>
    </location>
</feature>
<feature type="glycosylation site" description="N-linked (GlcNAc...) asparagine" evidence="2">
    <location>
        <position position="1206"/>
    </location>
</feature>
<feature type="glycosylation site" description="N-linked (GlcNAc...) asparagine" evidence="9">
    <location>
        <position position="1250"/>
    </location>
</feature>
<feature type="glycosylation site" description="N-linked (GlcNAc...) asparagine" evidence="9">
    <location>
        <position position="1259"/>
    </location>
</feature>
<feature type="disulfide bond" evidence="1">
    <location>
        <begin position="101"/>
        <end position="111"/>
    </location>
</feature>
<feature type="disulfide bond" evidence="1">
    <location>
        <begin position="105"/>
        <end position="118"/>
    </location>
</feature>
<feature type="disulfide bond" evidence="1">
    <location>
        <begin position="120"/>
        <end position="129"/>
    </location>
</feature>
<feature type="disulfide bond" evidence="1">
    <location>
        <begin position="250"/>
        <end position="260"/>
    </location>
</feature>
<feature type="disulfide bond" evidence="1">
    <location>
        <begin position="254"/>
        <end position="271"/>
    </location>
</feature>
<feature type="disulfide bond" evidence="1">
    <location>
        <begin position="273"/>
        <end position="282"/>
    </location>
</feature>
<feature type="disulfide bond" evidence="1">
    <location>
        <begin position="816"/>
        <end position="918"/>
    </location>
</feature>
<feature type="disulfide bond" evidence="1">
    <location>
        <begin position="1063"/>
        <end position="1071"/>
    </location>
</feature>
<feature type="disulfide bond" evidence="1">
    <location>
        <begin position="1065"/>
        <end position="1077"/>
    </location>
</feature>
<feature type="disulfide bond" evidence="1">
    <location>
        <begin position="1080"/>
        <end position="1089"/>
    </location>
</feature>
<feature type="disulfide bond" evidence="1">
    <location>
        <begin position="1092"/>
        <end position="1106"/>
    </location>
</feature>
<feature type="disulfide bond" evidence="1">
    <location>
        <begin position="1127"/>
        <end position="1137"/>
    </location>
</feature>
<feature type="disulfide bond" evidence="1">
    <location>
        <begin position="1140"/>
        <end position="1155"/>
    </location>
</feature>
<feature type="splice variant" id="VSP_001372" description="In isoform 3." evidence="18">
    <location>
        <begin position="31"/>
        <end position="104"/>
    </location>
</feature>
<feature type="splice variant" id="VSP_001375" description="In isoform 2 and isoform 3." evidence="15 16 17">
    <original>IAFSQHSNFMDLVQFFVTFFSCFLSLLLVAAVVWKIKQSCWASRRREQLLREMQQMASRPFASVNVALETDEEPPDLIGGSIKTVPKPIALEPCFGNKAAVLSVFVRLPRGLGGIPPPGQSGLAVASALVDISQQMPIVYKEKSGAVRNRKQQPPAQPGTCI</original>
    <variation>VQTEQ</variation>
    <location>
        <begin position="1268"/>
        <end position="1429"/>
    </location>
</feature>
<feature type="sequence variant" id="VAR_048967" description="In dbSNP:rs6107308.">
    <original>D</original>
    <variation>A</variation>
    <location>
        <position position="303"/>
    </location>
</feature>
<feature type="sequence variant" id="VAR_048968" description="In dbSNP:rs17782078.">
    <original>I</original>
    <variation>T</variation>
    <location>
        <position position="426"/>
    </location>
</feature>
<feature type="sequence variant" id="VAR_048969" description="In dbSNP:rs3886999.">
    <original>R</original>
    <variation>K</variation>
    <location>
        <position position="1152"/>
    </location>
</feature>
<feature type="sequence variant" id="VAR_048970" description="In dbSNP:rs12329487.">
    <original>V</original>
    <variation>I</variation>
    <location>
        <position position="1226"/>
    </location>
</feature>
<feature type="sequence conflict" description="In Ref. 2; AAD03057." evidence="18" ref="2">
    <original>S</original>
    <variation>P</variation>
    <location>
        <position position="69"/>
    </location>
</feature>
<feature type="sequence conflict" description="In Ref. 2; AAD03057." evidence="18" ref="2">
    <original>D</original>
    <variation>E</variation>
    <location>
        <position position="267"/>
    </location>
</feature>
<feature type="sequence conflict" description="In Ref. 2; AAD03057." evidence="18" ref="2">
    <original>S</original>
    <variation>P</variation>
    <location>
        <position position="413"/>
    </location>
</feature>
<feature type="sequence conflict" description="In Ref. 3; BAF85699." evidence="18" ref="3">
    <original>V</original>
    <variation>A</variation>
    <location>
        <position position="620"/>
    </location>
</feature>
<feature type="sequence conflict" description="In Ref. 6; AA sequence." evidence="18" ref="6">
    <original>C</original>
    <variation>G</variation>
    <location>
        <position position="704"/>
    </location>
</feature>
<feature type="sequence conflict" description="In Ref. 1; AAF72881/AAF72882." evidence="18" ref="1">
    <original>E</original>
    <variation>K</variation>
    <location>
        <position position="1172"/>
    </location>
</feature>
<accession>O75882</accession>
<accession>A8KAE5</accession>
<accession>O60295</accession>
<accession>O95414</accession>
<accession>Q3MIT3</accession>
<accession>Q5TDA2</accession>
<accession>Q5TDA4</accession>
<accession>Q5VYW3</accession>
<accession>Q9NTQ3</accession>
<accession>Q9NTQ4</accession>
<accession>Q9NU01</accession>
<accession>Q9NZ57</accession>
<accession>Q9NZ58</accession>
<accession>Q9UC75</accession>
<accession>Q9UDF5</accession>
<evidence type="ECO:0000250" key="1"/>
<evidence type="ECO:0000255" key="2"/>
<evidence type="ECO:0000255" key="3">
    <source>
        <dbReference type="PROSITE-ProRule" id="PRU00040"/>
    </source>
</evidence>
<evidence type="ECO:0000255" key="4">
    <source>
        <dbReference type="PROSITE-ProRule" id="PRU00059"/>
    </source>
</evidence>
<evidence type="ECO:0000255" key="5">
    <source>
        <dbReference type="PROSITE-ProRule" id="PRU00076"/>
    </source>
</evidence>
<evidence type="ECO:0000255" key="6">
    <source>
        <dbReference type="PROSITE-ProRule" id="PRU00460"/>
    </source>
</evidence>
<evidence type="ECO:0000269" key="7">
    <source>
    </source>
</evidence>
<evidence type="ECO:0000269" key="8">
    <source>
    </source>
</evidence>
<evidence type="ECO:0000269" key="9">
    <source>
    </source>
</evidence>
<evidence type="ECO:0000269" key="10">
    <source>
    </source>
</evidence>
<evidence type="ECO:0000269" key="11">
    <source>
    </source>
</evidence>
<evidence type="ECO:0000269" key="12">
    <source>
    </source>
</evidence>
<evidence type="ECO:0000269" key="13">
    <source>
    </source>
</evidence>
<evidence type="ECO:0000269" key="14">
    <source>
    </source>
</evidence>
<evidence type="ECO:0000303" key="15">
    <source>
    </source>
</evidence>
<evidence type="ECO:0000303" key="16">
    <source>
    </source>
</evidence>
<evidence type="ECO:0000303" key="17">
    <source ref="2"/>
</evidence>
<evidence type="ECO:0000305" key="18"/>
<evidence type="ECO:0000305" key="19">
    <source>
    </source>
</evidence>
<proteinExistence type="evidence at protein level"/>
<comment type="function">
    <text evidence="1 14">Involved in the initial immune cell clustering during inflammatory response and may regulate chemotactic activity of chemokines. May play a role in melanocortin signaling pathways that regulate energy homeostasis and hair color. Low-affinity receptor for agouti (By similarity). Has a critical role in normal myelination in the central nervous system (By similarity).</text>
</comment>
<comment type="subunit">
    <text evidence="13">Monomer and homotrimer.</text>
</comment>
<comment type="subcellular location">
    <molecule>Isoform 1</molecule>
    <subcellularLocation>
        <location evidence="13">Cell membrane</location>
        <topology evidence="13">Single-pass type I membrane protein</topology>
    </subcellularLocation>
</comment>
<comment type="subcellular location">
    <molecule>Isoform 2</molecule>
    <subcellularLocation>
        <location evidence="13 14">Secreted</location>
    </subcellularLocation>
</comment>
<comment type="subcellular location">
    <molecule>Isoform 3</molecule>
    <subcellularLocation>
        <location evidence="13">Secreted</location>
    </subcellularLocation>
</comment>
<comment type="alternative products">
    <event type="alternative splicing"/>
    <isoform>
        <id>O75882-1</id>
        <name>1</name>
        <name>Membrane</name>
        <sequence type="displayed"/>
    </isoform>
    <isoform>
        <id>O75882-2</id>
        <name>2</name>
        <name>Secreted</name>
        <sequence type="described" ref="VSP_001375"/>
    </isoform>
    <isoform>
        <id>O75882-3</id>
        <name>3</name>
        <sequence type="described" ref="VSP_001372 VSP_001375"/>
    </isoform>
</comment>
<comment type="tissue specificity">
    <text evidence="7 10">Isoform 2 is detected in plasma (at protein level). Expressed and secreted by activated T-lymphocytes. Expressed at low to moderate levels in peripheral blood leukocytes, spleen, lymph node, tonsil, bone marrow and fetal liver. At very low levels found in thymus. Isoform 2 is the major isoform in peripheral blood leukocytes.</text>
</comment>
<comment type="induction">
    <text>Activation of peripheral blood leukocytes with phytohemagglutinin induces strong expression of the membrane isoform followed by the release of the secreted isoform.</text>
</comment>
<comment type="PTM">
    <text evidence="8 9 10 11 12 13">Heavily glycosylated.</text>
</comment>
<comment type="caution">
    <text evidence="19">Was originally (PubMed:7539799, PubMed:9736737) thought to have dipeptidase activity but it was shown later to lack that activity.</text>
</comment>
<comment type="online information" name="Functional Glycomics Gateway - Glycan Binding">
    <link uri="http://www.functionalglycomics.org/glycomics/GBPServlet?&amp;operationType=view&amp;cbpId=cbp_hum_Ctlect_206"/>
    <text>Attractin-2</text>
</comment>
<sequence>MVAAAAATEARLRRRTAATAALAGRSGGPHWDWDVTRAGRPGLGAGLRLPRLLSPPLRPRLLLLLLLLSPPLLLLLLPCEAEAAAAAAAVSGSAAAEAKECDRPCVNGGRCNPGTGQCVCPAGWVGEQCQHCGGRFRLTGSSGFVTDGPGNYKYKTKCTWLIEGQPNRIMRLRFNHFATECSWDHLYVYDGDSIYAPLVAAFSGLIVPERDGNETVPEVVATSGYALLHFFSDAAYNLTGFNITYSFDMCPNNCSGRGECKISNSSDTVECECSENWKGEACDIPHCTDNCGFPHRGICNSSDVRGCSCFSDWQGPGCSVPVPANQSFWTREEYSNLKLPRASHKAVVNGNIMWVVGGYMFNHSDYNMVLAYDLASREWLPLNRSVNNVVVRYGHSLALYKDKIYMYGGKIDSTGNVTNELRVFHIHNESWVLLTPKAKEQYAVVGHSAHIVTLKNGRVVMLVIFGHCPLYGYISNVQEYDLDKNTWSILHTQGALVQGGYGHSSVYDHRTRALYVHGGYKAFSANKYRLADDLYRYDVDTQMWTILKDSRFFRYLHTAVIVSGTMLVFGGNTHNDTSMSHGAKCFSSDFMAYDIACDRWSVLPRPDLHHDVNRFGHSAVLHNSTMYVFGGFNSLLLSDILVFTSEQCDAHRSEAACLAAGPGIRCVWNTGSSQCISWALATDEQEEKLKSECFSKRTLDHDRCDQHTDCYSCTANTNDCHWCNDHCVPRNHSCSEGQISIFRYENCPKDNPMYYCNKKTSCRSCALDQNCQWEPRNQECIALPENICGIGWHLVGNSCLKITTAKENYDNAKLFCRNHNALLASLTTQKKVEFVLKQLRIMQSSQSMSKLTLTPWVGLRKINVSYWCWEDMSPFTNSLLQWMPSEPSDAGFCGILSEPSTRGLKAATCINPLNGSVCERPANHSAKQCRTPCALRTACGDCTSGSSECMWCSNMKQCVDSNAYVASFPFGQCMEWYTMSTCPPENCSGYCTCSHCLEQPGCGWCTDPSNTGKGKCIEGSYKGPVKMPSQAPTGNFYPQPLLNSSMCLEDSRYNWSFIHCPACQCNGHSKCINQSICEKCENLTTGKHCETCISGFYGDPTNGGKCQPCKCNGHASLCNTNTGKCFCTTKGVKGDECQLCEVENRYQGNPLRGTCYYTLLIDYQFTFSLSQEDDRYYTAINFVATPDEQNRDLDMFINASKNFNLNITWAASFSAGTQAGEEMPVVSKTNIKEYKDSFSNEKFDFRNHPNITFFVYVSNFTWPIKIQIAFSQHSNFMDLVQFFVTFFSCFLSLLLVAAVVWKIKQSCWASRRREQLLREMQQMASRPFASVNVALETDEEPPDLIGGSIKTVPKPIALEPCFGNKAAVLSVFVRLPRGLGGIPPPGQSGLAVASALVDISQQMPIVYKEKSGAVRNRKQQPPAQPGTCI</sequence>
<gene>
    <name type="primary">ATRN</name>
    <name type="synonym">KIAA0548</name>
    <name type="synonym">MGCA</name>
</gene>
<organism>
    <name type="scientific">Homo sapiens</name>
    <name type="common">Human</name>
    <dbReference type="NCBI Taxonomy" id="9606"/>
    <lineage>
        <taxon>Eukaryota</taxon>
        <taxon>Metazoa</taxon>
        <taxon>Chordata</taxon>
        <taxon>Craniata</taxon>
        <taxon>Vertebrata</taxon>
        <taxon>Euteleostomi</taxon>
        <taxon>Mammalia</taxon>
        <taxon>Eutheria</taxon>
        <taxon>Euarchontoglires</taxon>
        <taxon>Primates</taxon>
        <taxon>Haplorrhini</taxon>
        <taxon>Catarrhini</taxon>
        <taxon>Hominidae</taxon>
        <taxon>Homo</taxon>
    </lineage>
</organism>
<name>ATRN_HUMAN</name>
<keyword id="KW-0025">Alternative splicing</keyword>
<keyword id="KW-1003">Cell membrane</keyword>
<keyword id="KW-0903">Direct protein sequencing</keyword>
<keyword id="KW-1015">Disulfide bond</keyword>
<keyword id="KW-0245">EGF-like domain</keyword>
<keyword id="KW-0325">Glycoprotein</keyword>
<keyword id="KW-0395">Inflammatory response</keyword>
<keyword id="KW-0880">Kelch repeat</keyword>
<keyword id="KW-0424">Laminin EGF-like domain</keyword>
<keyword id="KW-0430">Lectin</keyword>
<keyword id="KW-0472">Membrane</keyword>
<keyword id="KW-1267">Proteomics identification</keyword>
<keyword id="KW-0675">Receptor</keyword>
<keyword id="KW-1185">Reference proteome</keyword>
<keyword id="KW-0677">Repeat</keyword>
<keyword id="KW-0964">Secreted</keyword>
<keyword id="KW-0732">Signal</keyword>
<keyword id="KW-0812">Transmembrane</keyword>
<keyword id="KW-1133">Transmembrane helix</keyword>
<protein>
    <recommendedName>
        <fullName>Attractin</fullName>
    </recommendedName>
    <alternativeName>
        <fullName>DPPT-L</fullName>
    </alternativeName>
    <alternativeName>
        <fullName>Mahogany homolog</fullName>
    </alternativeName>
</protein>
<reference key="1">
    <citation type="journal article" date="2000" name="Proc. Natl. Acad. Sci. U.S.A.">
        <title>Secreted and membrane attractin result from alternative splicing of the human ATRN gene.</title>
        <authorList>
            <person name="Tang W."/>
            <person name="Gunn T.M."/>
            <person name="McLaughlin D.F."/>
            <person name="Barsh G.S."/>
            <person name="Schlossman S.F."/>
            <person name="Duke-Cohan J.S."/>
        </authorList>
    </citation>
    <scope>NUCLEOTIDE SEQUENCE [GENOMIC DNA]</scope>
    <scope>ALTERNATIVE SPLICING</scope>
    <scope>TISSUE SPECIFICITY</scope>
</reference>
<reference key="2">
    <citation type="submission" date="1998-11" db="EMBL/GenBank/DDBJ databases">
        <title>Cloning of cDNA for attractin-2, identical with that of attractin except for a GC-rich 222 bp 5' insertion.</title>
        <authorList>
            <person name="Duke-Cohan J.S."/>
            <person name="Gu J."/>
            <person name="Freeman G.J."/>
            <person name="Schlossman S.F."/>
        </authorList>
    </citation>
    <scope>NUCLEOTIDE SEQUENCE [MRNA] (ISOFORM 2)</scope>
</reference>
<reference key="3">
    <citation type="journal article" date="2004" name="Nat. Genet.">
        <title>Complete sequencing and characterization of 21,243 full-length human cDNAs.</title>
        <authorList>
            <person name="Ota T."/>
            <person name="Suzuki Y."/>
            <person name="Nishikawa T."/>
            <person name="Otsuki T."/>
            <person name="Sugiyama T."/>
            <person name="Irie R."/>
            <person name="Wakamatsu A."/>
            <person name="Hayashi K."/>
            <person name="Sato H."/>
            <person name="Nagai K."/>
            <person name="Kimura K."/>
            <person name="Makita H."/>
            <person name="Sekine M."/>
            <person name="Obayashi M."/>
            <person name="Nishi T."/>
            <person name="Shibahara T."/>
            <person name="Tanaka T."/>
            <person name="Ishii S."/>
            <person name="Yamamoto J."/>
            <person name="Saito K."/>
            <person name="Kawai Y."/>
            <person name="Isono Y."/>
            <person name="Nakamura Y."/>
            <person name="Nagahari K."/>
            <person name="Murakami K."/>
            <person name="Yasuda T."/>
            <person name="Iwayanagi T."/>
            <person name="Wagatsuma M."/>
            <person name="Shiratori A."/>
            <person name="Sudo H."/>
            <person name="Hosoiri T."/>
            <person name="Kaku Y."/>
            <person name="Kodaira H."/>
            <person name="Kondo H."/>
            <person name="Sugawara M."/>
            <person name="Takahashi M."/>
            <person name="Kanda K."/>
            <person name="Yokoi T."/>
            <person name="Furuya T."/>
            <person name="Kikkawa E."/>
            <person name="Omura Y."/>
            <person name="Abe K."/>
            <person name="Kamihara K."/>
            <person name="Katsuta N."/>
            <person name="Sato K."/>
            <person name="Tanikawa M."/>
            <person name="Yamazaki M."/>
            <person name="Ninomiya K."/>
            <person name="Ishibashi T."/>
            <person name="Yamashita H."/>
            <person name="Murakawa K."/>
            <person name="Fujimori K."/>
            <person name="Tanai H."/>
            <person name="Kimata M."/>
            <person name="Watanabe M."/>
            <person name="Hiraoka S."/>
            <person name="Chiba Y."/>
            <person name="Ishida S."/>
            <person name="Ono Y."/>
            <person name="Takiguchi S."/>
            <person name="Watanabe S."/>
            <person name="Yosida M."/>
            <person name="Hotuta T."/>
            <person name="Kusano J."/>
            <person name="Kanehori K."/>
            <person name="Takahashi-Fujii A."/>
            <person name="Hara H."/>
            <person name="Tanase T.-O."/>
            <person name="Nomura Y."/>
            <person name="Togiya S."/>
            <person name="Komai F."/>
            <person name="Hara R."/>
            <person name="Takeuchi K."/>
            <person name="Arita M."/>
            <person name="Imose N."/>
            <person name="Musashino K."/>
            <person name="Yuuki H."/>
            <person name="Oshima A."/>
            <person name="Sasaki N."/>
            <person name="Aotsuka S."/>
            <person name="Yoshikawa Y."/>
            <person name="Matsunawa H."/>
            <person name="Ichihara T."/>
            <person name="Shiohata N."/>
            <person name="Sano S."/>
            <person name="Moriya S."/>
            <person name="Momiyama H."/>
            <person name="Satoh N."/>
            <person name="Takami S."/>
            <person name="Terashima Y."/>
            <person name="Suzuki O."/>
            <person name="Nakagawa S."/>
            <person name="Senoh A."/>
            <person name="Mizoguchi H."/>
            <person name="Goto Y."/>
            <person name="Shimizu F."/>
            <person name="Wakebe H."/>
            <person name="Hishigaki H."/>
            <person name="Watanabe T."/>
            <person name="Sugiyama A."/>
            <person name="Takemoto M."/>
            <person name="Kawakami B."/>
            <person name="Yamazaki M."/>
            <person name="Watanabe K."/>
            <person name="Kumagai A."/>
            <person name="Itakura S."/>
            <person name="Fukuzumi Y."/>
            <person name="Fujimori Y."/>
            <person name="Komiyama M."/>
            <person name="Tashiro H."/>
            <person name="Tanigami A."/>
            <person name="Fujiwara T."/>
            <person name="Ono T."/>
            <person name="Yamada K."/>
            <person name="Fujii Y."/>
            <person name="Ozaki K."/>
            <person name="Hirao M."/>
            <person name="Ohmori Y."/>
            <person name="Kawabata A."/>
            <person name="Hikiji T."/>
            <person name="Kobatake N."/>
            <person name="Inagaki H."/>
            <person name="Ikema Y."/>
            <person name="Okamoto S."/>
            <person name="Okitani R."/>
            <person name="Kawakami T."/>
            <person name="Noguchi S."/>
            <person name="Itoh T."/>
            <person name="Shigeta K."/>
            <person name="Senba T."/>
            <person name="Matsumura K."/>
            <person name="Nakajima Y."/>
            <person name="Mizuno T."/>
            <person name="Morinaga M."/>
            <person name="Sasaki M."/>
            <person name="Togashi T."/>
            <person name="Oyama M."/>
            <person name="Hata H."/>
            <person name="Watanabe M."/>
            <person name="Komatsu T."/>
            <person name="Mizushima-Sugano J."/>
            <person name="Satoh T."/>
            <person name="Shirai Y."/>
            <person name="Takahashi Y."/>
            <person name="Nakagawa K."/>
            <person name="Okumura K."/>
            <person name="Nagase T."/>
            <person name="Nomura N."/>
            <person name="Kikuchi H."/>
            <person name="Masuho Y."/>
            <person name="Yamashita R."/>
            <person name="Nakai K."/>
            <person name="Yada T."/>
            <person name="Nakamura Y."/>
            <person name="Ohara O."/>
            <person name="Isogai T."/>
            <person name="Sugano S."/>
        </authorList>
    </citation>
    <scope>NUCLEOTIDE SEQUENCE [LARGE SCALE MRNA] (ISOFORM 2)</scope>
    <source>
        <tissue>Trachea</tissue>
    </source>
</reference>
<reference key="4">
    <citation type="journal article" date="2001" name="Nature">
        <title>The DNA sequence and comparative analysis of human chromosome 20.</title>
        <authorList>
            <person name="Deloukas P."/>
            <person name="Matthews L.H."/>
            <person name="Ashurst J.L."/>
            <person name="Burton J."/>
            <person name="Gilbert J.G.R."/>
            <person name="Jones M."/>
            <person name="Stavrides G."/>
            <person name="Almeida J.P."/>
            <person name="Babbage A.K."/>
            <person name="Bagguley C.L."/>
            <person name="Bailey J."/>
            <person name="Barlow K.F."/>
            <person name="Bates K.N."/>
            <person name="Beard L.M."/>
            <person name="Beare D.M."/>
            <person name="Beasley O.P."/>
            <person name="Bird C.P."/>
            <person name="Blakey S.E."/>
            <person name="Bridgeman A.M."/>
            <person name="Brown A.J."/>
            <person name="Buck D."/>
            <person name="Burrill W.D."/>
            <person name="Butler A.P."/>
            <person name="Carder C."/>
            <person name="Carter N.P."/>
            <person name="Chapman J.C."/>
            <person name="Clamp M."/>
            <person name="Clark G."/>
            <person name="Clark L.N."/>
            <person name="Clark S.Y."/>
            <person name="Clee C.M."/>
            <person name="Clegg S."/>
            <person name="Cobley V.E."/>
            <person name="Collier R.E."/>
            <person name="Connor R.E."/>
            <person name="Corby N.R."/>
            <person name="Coulson A."/>
            <person name="Coville G.J."/>
            <person name="Deadman R."/>
            <person name="Dhami P.D."/>
            <person name="Dunn M."/>
            <person name="Ellington A.G."/>
            <person name="Frankland J.A."/>
            <person name="Fraser A."/>
            <person name="French L."/>
            <person name="Garner P."/>
            <person name="Grafham D.V."/>
            <person name="Griffiths C."/>
            <person name="Griffiths M.N.D."/>
            <person name="Gwilliam R."/>
            <person name="Hall R.E."/>
            <person name="Hammond S."/>
            <person name="Harley J.L."/>
            <person name="Heath P.D."/>
            <person name="Ho S."/>
            <person name="Holden J.L."/>
            <person name="Howden P.J."/>
            <person name="Huckle E."/>
            <person name="Hunt A.R."/>
            <person name="Hunt S.E."/>
            <person name="Jekosch K."/>
            <person name="Johnson C.M."/>
            <person name="Johnson D."/>
            <person name="Kay M.P."/>
            <person name="Kimberley A.M."/>
            <person name="King A."/>
            <person name="Knights A."/>
            <person name="Laird G.K."/>
            <person name="Lawlor S."/>
            <person name="Lehvaeslaiho M.H."/>
            <person name="Leversha M.A."/>
            <person name="Lloyd C."/>
            <person name="Lloyd D.M."/>
            <person name="Lovell J.D."/>
            <person name="Marsh V.L."/>
            <person name="Martin S.L."/>
            <person name="McConnachie L.J."/>
            <person name="McLay K."/>
            <person name="McMurray A.A."/>
            <person name="Milne S.A."/>
            <person name="Mistry D."/>
            <person name="Moore M.J.F."/>
            <person name="Mullikin J.C."/>
            <person name="Nickerson T."/>
            <person name="Oliver K."/>
            <person name="Parker A."/>
            <person name="Patel R."/>
            <person name="Pearce T.A.V."/>
            <person name="Peck A.I."/>
            <person name="Phillimore B.J.C.T."/>
            <person name="Prathalingam S.R."/>
            <person name="Plumb R.W."/>
            <person name="Ramsay H."/>
            <person name="Rice C.M."/>
            <person name="Ross M.T."/>
            <person name="Scott C.E."/>
            <person name="Sehra H.K."/>
            <person name="Shownkeen R."/>
            <person name="Sims S."/>
            <person name="Skuce C.D."/>
            <person name="Smith M.L."/>
            <person name="Soderlund C."/>
            <person name="Steward C.A."/>
            <person name="Sulston J.E."/>
            <person name="Swann R.M."/>
            <person name="Sycamore N."/>
            <person name="Taylor R."/>
            <person name="Tee L."/>
            <person name="Thomas D.W."/>
            <person name="Thorpe A."/>
            <person name="Tracey A."/>
            <person name="Tromans A.C."/>
            <person name="Vaudin M."/>
            <person name="Wall M."/>
            <person name="Wallis J.M."/>
            <person name="Whitehead S.L."/>
            <person name="Whittaker P."/>
            <person name="Willey D.L."/>
            <person name="Williams L."/>
            <person name="Williams S.A."/>
            <person name="Wilming L."/>
            <person name="Wray P.W."/>
            <person name="Hubbard T."/>
            <person name="Durbin R.M."/>
            <person name="Bentley D.R."/>
            <person name="Beck S."/>
            <person name="Rogers J."/>
        </authorList>
    </citation>
    <scope>NUCLEOTIDE SEQUENCE [LARGE SCALE GENOMIC DNA]</scope>
</reference>
<reference key="5">
    <citation type="journal article" date="2004" name="Genome Res.">
        <title>The status, quality, and expansion of the NIH full-length cDNA project: the Mammalian Gene Collection (MGC).</title>
        <authorList>
            <consortium name="The MGC Project Team"/>
        </authorList>
    </citation>
    <scope>NUCLEOTIDE SEQUENCE [LARGE SCALE MRNA] (ISOFORM 2)</scope>
    <source>
        <tissue>Brain</tissue>
    </source>
</reference>
<reference key="6">
    <citation type="journal article" date="1995" name="J. Biol. Chem.">
        <title>A novel form of dipeptidylpeptidase IV found in human serum. Isolation, characterization, and comparison with T lymphocyte membrane dipeptidylpeptidase IV (CD26).</title>
        <authorList>
            <person name="Duke-Cohan J.S."/>
            <person name="Morimoto C."/>
            <person name="Rocker J.A."/>
            <person name="Schlossman S.F."/>
        </authorList>
    </citation>
    <scope>PROTEIN SEQUENCE OF 138-153; 537-548 AND 704-723 (ISOFORMS 1/2/3)</scope>
    <scope>SUBCELLULAR LOCATION</scope>
    <scope>GLYCOSYLATION</scope>
    <scope>SUBUNIT</scope>
    <source>
        <tissue>Serum</tissue>
    </source>
</reference>
<reference key="7">
    <citation type="journal article" date="1998" name="Proc. Natl. Acad. Sci. U.S.A.">
        <title>Attractin (DPPT-L), a member of the CUB family of cell adhesion and guidance proteins, is secreted by activated human T lymphocytes and modulates immune cell interactions.</title>
        <authorList>
            <person name="Duke-Cohan J.S."/>
            <person name="Gu J."/>
            <person name="McLaughlin D.F."/>
            <person name="Xu Y."/>
            <person name="Freeman G.J."/>
            <person name="Schlossman S.F."/>
        </authorList>
    </citation>
    <scope>PROTEIN SEQUENCE OF 138-153; 280-285; 355-376; 378-394; 405-411; 513-521; 538-547; 705-722; 735-755; 818-829; 851-860; 1145-1152; 1203-1213; 1243-1246 AND 1255-1272 (ISOFORM 2)</scope>
    <scope>FUNCTION</scope>
    <scope>SUBCELLULAR LOCATION</scope>
</reference>
<reference key="8">
    <citation type="journal article" date="1998" name="DNA Res.">
        <title>Prediction of the coding sequences of unidentified human genes. IX. The complete sequences of 100 new cDNA clones from brain which can code for large proteins in vitro.</title>
        <authorList>
            <person name="Nagase T."/>
            <person name="Ishikawa K."/>
            <person name="Miyajima N."/>
            <person name="Tanaka A."/>
            <person name="Kotani H."/>
            <person name="Nomura N."/>
            <person name="Ohara O."/>
        </authorList>
    </citation>
    <scope>NUCLEOTIDE SEQUENCE [LARGE SCALE MRNA] OF 978-1429 (ISOFORM 1)</scope>
    <source>
        <tissue>Brain</tissue>
    </source>
</reference>
<reference key="9">
    <citation type="journal article" date="2007" name="Biol. Chem.">
        <title>Does human attractin have DP4 activity?</title>
        <authorList>
            <person name="Friedrich D."/>
            <person name="Hoffmann T."/>
            <person name="Bar J."/>
            <person name="Wermann M."/>
            <person name="Manhart S."/>
            <person name="Heiser U."/>
            <person name="Demuth H.U."/>
        </authorList>
    </citation>
    <scope>PROTEIN SEQUENCE OF N-TERMINUS</scope>
    <scope>TISSUE SPECIFICITY</scope>
    <scope>GLYCOSYLATION</scope>
    <scope>IDENTIFICATION BY MASS SPECTROMETRY</scope>
</reference>
<reference key="10">
    <citation type="journal article" date="2004" name="Proteomics">
        <title>Screening for N-glycosylated proteins by liquid chromatography mass spectrometry.</title>
        <authorList>
            <person name="Bunkenborg J."/>
            <person name="Pilch B.J."/>
            <person name="Podtelejnikov A.V."/>
            <person name="Wisniewski J.R."/>
        </authorList>
    </citation>
    <scope>GLYCOSYLATION [LARGE SCALE ANALYSIS] AT ASN-264; ASN-383 AND ASN-731</scope>
    <source>
        <tissue>Plasma</tissue>
    </source>
</reference>
<reference key="11">
    <citation type="journal article" date="2005" name="J. Proteome Res.">
        <title>Human plasma N-glycoproteome analysis by immunoaffinity subtraction, hydrazide chemistry, and mass spectrometry.</title>
        <authorList>
            <person name="Liu T."/>
            <person name="Qian W.-J."/>
            <person name="Gritsenko M.A."/>
            <person name="Camp D.G. II"/>
            <person name="Monroe M.E."/>
            <person name="Moore R.J."/>
            <person name="Smith R.D."/>
        </authorList>
    </citation>
    <scope>GLYCOSYLATION [LARGE SCALE ANALYSIS] AT ASN-264; ASN-300; ASN-383; ASN-416; ASN-428; ASN-575; ASN-623; ASN-1043; ASN-1198; ASN-1250 AND ASN-1259</scope>
    <source>
        <tissue>Plasma</tissue>
    </source>
</reference>
<reference key="12">
    <citation type="journal article" date="2009" name="J. Proteome Res.">
        <title>Glycoproteomics analysis of human liver tissue by combination of multiple enzyme digestion and hydrazide chemistry.</title>
        <authorList>
            <person name="Chen R."/>
            <person name="Jiang X."/>
            <person name="Sun D."/>
            <person name="Han G."/>
            <person name="Wang F."/>
            <person name="Ye M."/>
            <person name="Wang L."/>
            <person name="Zou H."/>
        </authorList>
    </citation>
    <scope>GLYCOSYLATION [LARGE SCALE ANALYSIS] AT ASN-416</scope>
    <source>
        <tissue>Liver</tissue>
    </source>
</reference>
<reference key="13">
    <citation type="journal article" date="2009" name="Mol. Cell. Proteomics">
        <title>A strategy for precise and large scale identification of core fucosylated glycoproteins.</title>
        <authorList>
            <person name="Jia W."/>
            <person name="Lu Z."/>
            <person name="Fu Y."/>
            <person name="Wang H.P."/>
            <person name="Wang L.H."/>
            <person name="Chi H."/>
            <person name="Yuan Z.F."/>
            <person name="Zheng Z.B."/>
            <person name="Song L.N."/>
            <person name="Han H.H."/>
            <person name="Liang Y.M."/>
            <person name="Wang J.L."/>
            <person name="Cai Y."/>
            <person name="Zhang Y.K."/>
            <person name="Deng Y.L."/>
            <person name="Ying W.T."/>
            <person name="He S.M."/>
            <person name="Qian X.H."/>
        </authorList>
    </citation>
    <scope>GLYCOSYLATION AT ASN-300; ASN-383; ASN-731 AND ASN-1073</scope>
</reference>
<dbReference type="EMBL" id="AF218915">
    <property type="protein sequence ID" value="AAF72881.1"/>
    <property type="molecule type" value="Genomic_DNA"/>
</dbReference>
<dbReference type="EMBL" id="AF218889">
    <property type="protein sequence ID" value="AAF72881.1"/>
    <property type="status" value="JOINED"/>
    <property type="molecule type" value="Genomic_DNA"/>
</dbReference>
<dbReference type="EMBL" id="AF218890">
    <property type="protein sequence ID" value="AAF72881.1"/>
    <property type="status" value="JOINED"/>
    <property type="molecule type" value="Genomic_DNA"/>
</dbReference>
<dbReference type="EMBL" id="AF218891">
    <property type="protein sequence ID" value="AAF72881.1"/>
    <property type="status" value="JOINED"/>
    <property type="molecule type" value="Genomic_DNA"/>
</dbReference>
<dbReference type="EMBL" id="AF218892">
    <property type="protein sequence ID" value="AAF72881.1"/>
    <property type="status" value="JOINED"/>
    <property type="molecule type" value="Genomic_DNA"/>
</dbReference>
<dbReference type="EMBL" id="AF218893">
    <property type="protein sequence ID" value="AAF72881.1"/>
    <property type="status" value="JOINED"/>
    <property type="molecule type" value="Genomic_DNA"/>
</dbReference>
<dbReference type="EMBL" id="AF218894">
    <property type="protein sequence ID" value="AAF72881.1"/>
    <property type="status" value="JOINED"/>
    <property type="molecule type" value="Genomic_DNA"/>
</dbReference>
<dbReference type="EMBL" id="AF218895">
    <property type="protein sequence ID" value="AAF72881.1"/>
    <property type="status" value="JOINED"/>
    <property type="molecule type" value="Genomic_DNA"/>
</dbReference>
<dbReference type="EMBL" id="AF218896">
    <property type="protein sequence ID" value="AAF72881.1"/>
    <property type="status" value="JOINED"/>
    <property type="molecule type" value="Genomic_DNA"/>
</dbReference>
<dbReference type="EMBL" id="AF218897">
    <property type="protein sequence ID" value="AAF72881.1"/>
    <property type="status" value="JOINED"/>
    <property type="molecule type" value="Genomic_DNA"/>
</dbReference>
<dbReference type="EMBL" id="AF218898">
    <property type="protein sequence ID" value="AAF72881.1"/>
    <property type="status" value="JOINED"/>
    <property type="molecule type" value="Genomic_DNA"/>
</dbReference>
<dbReference type="EMBL" id="AF218899">
    <property type="protein sequence ID" value="AAF72881.1"/>
    <property type="status" value="JOINED"/>
    <property type="molecule type" value="Genomic_DNA"/>
</dbReference>
<dbReference type="EMBL" id="AF218900">
    <property type="protein sequence ID" value="AAF72881.1"/>
    <property type="status" value="JOINED"/>
    <property type="molecule type" value="Genomic_DNA"/>
</dbReference>
<dbReference type="EMBL" id="AF218901">
    <property type="protein sequence ID" value="AAF72881.1"/>
    <property type="status" value="JOINED"/>
    <property type="molecule type" value="Genomic_DNA"/>
</dbReference>
<dbReference type="EMBL" id="AF218902">
    <property type="protein sequence ID" value="AAF72881.1"/>
    <property type="status" value="JOINED"/>
    <property type="molecule type" value="Genomic_DNA"/>
</dbReference>
<dbReference type="EMBL" id="AF218903">
    <property type="protein sequence ID" value="AAF72881.1"/>
    <property type="status" value="JOINED"/>
    <property type="molecule type" value="Genomic_DNA"/>
</dbReference>
<dbReference type="EMBL" id="AF218904">
    <property type="protein sequence ID" value="AAF72881.1"/>
    <property type="status" value="JOINED"/>
    <property type="molecule type" value="Genomic_DNA"/>
</dbReference>
<dbReference type="EMBL" id="AF218905">
    <property type="protein sequence ID" value="AAF72881.1"/>
    <property type="status" value="JOINED"/>
    <property type="molecule type" value="Genomic_DNA"/>
</dbReference>
<dbReference type="EMBL" id="AF218906">
    <property type="protein sequence ID" value="AAF72881.1"/>
    <property type="status" value="JOINED"/>
    <property type="molecule type" value="Genomic_DNA"/>
</dbReference>
<dbReference type="EMBL" id="AF218907">
    <property type="protein sequence ID" value="AAF72881.1"/>
    <property type="status" value="JOINED"/>
    <property type="molecule type" value="Genomic_DNA"/>
</dbReference>
<dbReference type="EMBL" id="AF218908">
    <property type="protein sequence ID" value="AAF72881.1"/>
    <property type="status" value="JOINED"/>
    <property type="molecule type" value="Genomic_DNA"/>
</dbReference>
<dbReference type="EMBL" id="AF218909">
    <property type="protein sequence ID" value="AAF72881.1"/>
    <property type="status" value="JOINED"/>
    <property type="molecule type" value="Genomic_DNA"/>
</dbReference>
<dbReference type="EMBL" id="AF218911">
    <property type="protein sequence ID" value="AAF72881.1"/>
    <property type="status" value="JOINED"/>
    <property type="molecule type" value="Genomic_DNA"/>
</dbReference>
<dbReference type="EMBL" id="AF218912">
    <property type="protein sequence ID" value="AAF72881.1"/>
    <property type="status" value="JOINED"/>
    <property type="molecule type" value="Genomic_DNA"/>
</dbReference>
<dbReference type="EMBL" id="AF218913">
    <property type="protein sequence ID" value="AAF72881.1"/>
    <property type="status" value="JOINED"/>
    <property type="molecule type" value="Genomic_DNA"/>
</dbReference>
<dbReference type="EMBL" id="AF218914">
    <property type="protein sequence ID" value="AAF72881.1"/>
    <property type="status" value="JOINED"/>
    <property type="molecule type" value="Genomic_DNA"/>
</dbReference>
<dbReference type="EMBL" id="AF218910">
    <property type="protein sequence ID" value="AAF72882.1"/>
    <property type="molecule type" value="Genomic_DNA"/>
</dbReference>
<dbReference type="EMBL" id="AF218889">
    <property type="protein sequence ID" value="AAF72882.1"/>
    <property type="status" value="JOINED"/>
    <property type="molecule type" value="Genomic_DNA"/>
</dbReference>
<dbReference type="EMBL" id="AF218890">
    <property type="protein sequence ID" value="AAF72882.1"/>
    <property type="status" value="JOINED"/>
    <property type="molecule type" value="Genomic_DNA"/>
</dbReference>
<dbReference type="EMBL" id="AF218891">
    <property type="protein sequence ID" value="AAF72882.1"/>
    <property type="status" value="JOINED"/>
    <property type="molecule type" value="Genomic_DNA"/>
</dbReference>
<dbReference type="EMBL" id="AF218892">
    <property type="protein sequence ID" value="AAF72882.1"/>
    <property type="status" value="JOINED"/>
    <property type="molecule type" value="Genomic_DNA"/>
</dbReference>
<dbReference type="EMBL" id="AF218893">
    <property type="protein sequence ID" value="AAF72882.1"/>
    <property type="status" value="JOINED"/>
    <property type="molecule type" value="Genomic_DNA"/>
</dbReference>
<dbReference type="EMBL" id="AF218894">
    <property type="protein sequence ID" value="AAF72882.1"/>
    <property type="status" value="JOINED"/>
    <property type="molecule type" value="Genomic_DNA"/>
</dbReference>
<dbReference type="EMBL" id="AF218895">
    <property type="protein sequence ID" value="AAF72882.1"/>
    <property type="status" value="JOINED"/>
    <property type="molecule type" value="Genomic_DNA"/>
</dbReference>
<dbReference type="EMBL" id="AF218896">
    <property type="protein sequence ID" value="AAF72882.1"/>
    <property type="status" value="JOINED"/>
    <property type="molecule type" value="Genomic_DNA"/>
</dbReference>
<dbReference type="EMBL" id="AF218897">
    <property type="protein sequence ID" value="AAF72882.1"/>
    <property type="status" value="JOINED"/>
    <property type="molecule type" value="Genomic_DNA"/>
</dbReference>
<dbReference type="EMBL" id="AF218898">
    <property type="protein sequence ID" value="AAF72882.1"/>
    <property type="status" value="JOINED"/>
    <property type="molecule type" value="Genomic_DNA"/>
</dbReference>
<dbReference type="EMBL" id="AF218899">
    <property type="protein sequence ID" value="AAF72882.1"/>
    <property type="status" value="JOINED"/>
    <property type="molecule type" value="Genomic_DNA"/>
</dbReference>
<dbReference type="EMBL" id="AF218900">
    <property type="protein sequence ID" value="AAF72882.1"/>
    <property type="status" value="JOINED"/>
    <property type="molecule type" value="Genomic_DNA"/>
</dbReference>
<dbReference type="EMBL" id="AF218901">
    <property type="protein sequence ID" value="AAF72882.1"/>
    <property type="status" value="JOINED"/>
    <property type="molecule type" value="Genomic_DNA"/>
</dbReference>
<dbReference type="EMBL" id="AF218902">
    <property type="protein sequence ID" value="AAF72882.1"/>
    <property type="status" value="JOINED"/>
    <property type="molecule type" value="Genomic_DNA"/>
</dbReference>
<dbReference type="EMBL" id="AF218903">
    <property type="protein sequence ID" value="AAF72882.1"/>
    <property type="status" value="JOINED"/>
    <property type="molecule type" value="Genomic_DNA"/>
</dbReference>
<dbReference type="EMBL" id="AF218904">
    <property type="protein sequence ID" value="AAF72882.1"/>
    <property type="status" value="JOINED"/>
    <property type="molecule type" value="Genomic_DNA"/>
</dbReference>
<dbReference type="EMBL" id="AF218905">
    <property type="protein sequence ID" value="AAF72882.1"/>
    <property type="status" value="JOINED"/>
    <property type="molecule type" value="Genomic_DNA"/>
</dbReference>
<dbReference type="EMBL" id="AF218906">
    <property type="protein sequence ID" value="AAF72882.1"/>
    <property type="status" value="JOINED"/>
    <property type="molecule type" value="Genomic_DNA"/>
</dbReference>
<dbReference type="EMBL" id="AF218907">
    <property type="protein sequence ID" value="AAF72882.1"/>
    <property type="status" value="JOINED"/>
    <property type="molecule type" value="Genomic_DNA"/>
</dbReference>
<dbReference type="EMBL" id="AF218908">
    <property type="protein sequence ID" value="AAF72882.1"/>
    <property type="status" value="JOINED"/>
    <property type="molecule type" value="Genomic_DNA"/>
</dbReference>
<dbReference type="EMBL" id="AF218909">
    <property type="protein sequence ID" value="AAF72882.1"/>
    <property type="status" value="JOINED"/>
    <property type="molecule type" value="Genomic_DNA"/>
</dbReference>
<dbReference type="EMBL" id="AF106861">
    <property type="protein sequence ID" value="AAD03057.1"/>
    <property type="molecule type" value="mRNA"/>
</dbReference>
<dbReference type="EMBL" id="AK293010">
    <property type="protein sequence ID" value="BAF85699.1"/>
    <property type="molecule type" value="mRNA"/>
</dbReference>
<dbReference type="EMBL" id="AL109805">
    <property type="status" value="NOT_ANNOTATED_CDS"/>
    <property type="molecule type" value="Genomic_DNA"/>
</dbReference>
<dbReference type="EMBL" id="AL132773">
    <property type="status" value="NOT_ANNOTATED_CDS"/>
    <property type="molecule type" value="Genomic_DNA"/>
</dbReference>
<dbReference type="EMBL" id="AL353193">
    <property type="status" value="NOT_ANNOTATED_CDS"/>
    <property type="molecule type" value="Genomic_DNA"/>
</dbReference>
<dbReference type="EMBL" id="BC101705">
    <property type="protein sequence ID" value="AAI01706.1"/>
    <property type="molecule type" value="mRNA"/>
</dbReference>
<dbReference type="EMBL" id="AB011120">
    <property type="protein sequence ID" value="BAA25474.1"/>
    <property type="molecule type" value="mRNA"/>
</dbReference>
<dbReference type="CCDS" id="CCDS13053.1">
    <molecule id="O75882-1"/>
</dbReference>
<dbReference type="CCDS" id="CCDS13054.1">
    <molecule id="O75882-2"/>
</dbReference>
<dbReference type="RefSeq" id="NP_001193976.1">
    <property type="nucleotide sequence ID" value="NM_001207047.2"/>
</dbReference>
<dbReference type="RefSeq" id="NP_001310261.1">
    <property type="nucleotide sequence ID" value="NM_001323332.1"/>
</dbReference>
<dbReference type="RefSeq" id="NP_647537.1">
    <molecule id="O75882-1"/>
    <property type="nucleotide sequence ID" value="NM_139321.3"/>
</dbReference>
<dbReference type="RefSeq" id="NP_647538.1">
    <molecule id="O75882-2"/>
    <property type="nucleotide sequence ID" value="NM_139322.4"/>
</dbReference>
<dbReference type="SMR" id="O75882"/>
<dbReference type="BioGRID" id="114033">
    <property type="interactions" value="108"/>
</dbReference>
<dbReference type="FunCoup" id="O75882">
    <property type="interactions" value="1511"/>
</dbReference>
<dbReference type="IntAct" id="O75882">
    <property type="interactions" value="47"/>
</dbReference>
<dbReference type="MINT" id="O75882"/>
<dbReference type="STRING" id="9606.ENSP00000262919"/>
<dbReference type="GlyConnect" id="679">
    <property type="glycosylation" value="50 N-Linked glycans (15 sites)"/>
</dbReference>
<dbReference type="GlyCosmos" id="O75882">
    <property type="glycosylation" value="26 sites, 62 glycans"/>
</dbReference>
<dbReference type="GlyGen" id="O75882">
    <property type="glycosylation" value="31 sites, 120 N-linked glycans (18 sites), 2 O-linked glycans (5 sites)"/>
</dbReference>
<dbReference type="iPTMnet" id="O75882"/>
<dbReference type="PhosphoSitePlus" id="O75882"/>
<dbReference type="SwissPalm" id="O75882"/>
<dbReference type="BioMuta" id="ATRN"/>
<dbReference type="CPTAC" id="CPTAC-664"/>
<dbReference type="CPTAC" id="non-CPTAC-1089"/>
<dbReference type="jPOST" id="O75882"/>
<dbReference type="MassIVE" id="O75882"/>
<dbReference type="PaxDb" id="9606-ENSP00000262919"/>
<dbReference type="PeptideAtlas" id="O75882"/>
<dbReference type="ProteomicsDB" id="50238">
    <molecule id="O75882-1"/>
</dbReference>
<dbReference type="ProteomicsDB" id="50239">
    <molecule id="O75882-2"/>
</dbReference>
<dbReference type="ProteomicsDB" id="50240">
    <molecule id="O75882-3"/>
</dbReference>
<dbReference type="Pumba" id="O75882"/>
<dbReference type="Antibodypedia" id="2265">
    <property type="antibodies" value="243 antibodies from 30 providers"/>
</dbReference>
<dbReference type="DNASU" id="8455"/>
<dbReference type="Ensembl" id="ENST00000262919.10">
    <molecule id="O75882-1"/>
    <property type="protein sequence ID" value="ENSP00000262919.5"/>
    <property type="gene ID" value="ENSG00000088812.18"/>
</dbReference>
<dbReference type="Ensembl" id="ENST00000446916.2">
    <molecule id="O75882-2"/>
    <property type="protein sequence ID" value="ENSP00000416587.2"/>
    <property type="gene ID" value="ENSG00000088812.18"/>
</dbReference>
<dbReference type="GeneID" id="8455"/>
<dbReference type="KEGG" id="hsa:8455"/>
<dbReference type="MANE-Select" id="ENST00000262919.10">
    <property type="protein sequence ID" value="ENSP00000262919.5"/>
    <property type="RefSeq nucleotide sequence ID" value="NM_139321.3"/>
    <property type="RefSeq protein sequence ID" value="NP_647537.1"/>
</dbReference>
<dbReference type="UCSC" id="uc002wil.3">
    <molecule id="O75882-1"/>
    <property type="organism name" value="human"/>
</dbReference>
<dbReference type="AGR" id="HGNC:885"/>
<dbReference type="CTD" id="8455"/>
<dbReference type="DisGeNET" id="8455"/>
<dbReference type="GeneCards" id="ATRN"/>
<dbReference type="HGNC" id="HGNC:885">
    <property type="gene designation" value="ATRN"/>
</dbReference>
<dbReference type="HPA" id="ENSG00000088812">
    <property type="expression patterns" value="Low tissue specificity"/>
</dbReference>
<dbReference type="MalaCards" id="ATRN"/>
<dbReference type="MIM" id="603130">
    <property type="type" value="gene"/>
</dbReference>
<dbReference type="neXtProt" id="NX_O75882"/>
<dbReference type="OpenTargets" id="ENSG00000088812"/>
<dbReference type="PharmGKB" id="PA25178"/>
<dbReference type="VEuPathDB" id="HostDB:ENSG00000088812"/>
<dbReference type="eggNOG" id="KOG1388">
    <property type="taxonomic scope" value="Eukaryota"/>
</dbReference>
<dbReference type="GeneTree" id="ENSGT00940000157346"/>
<dbReference type="HOGENOM" id="CLU_003930_0_0_1"/>
<dbReference type="InParanoid" id="O75882"/>
<dbReference type="OMA" id="MNGCPSD"/>
<dbReference type="OrthoDB" id="9998912at2759"/>
<dbReference type="PAN-GO" id="O75882">
    <property type="GO annotations" value="6 GO annotations based on evolutionary models"/>
</dbReference>
<dbReference type="PhylomeDB" id="O75882"/>
<dbReference type="TreeFam" id="TF321873"/>
<dbReference type="PathwayCommons" id="O75882"/>
<dbReference type="SignaLink" id="O75882"/>
<dbReference type="SIGNOR" id="O75882"/>
<dbReference type="BioGRID-ORCS" id="8455">
    <property type="hits" value="29 hits in 1157 CRISPR screens"/>
</dbReference>
<dbReference type="ChiTaRS" id="ATRN">
    <property type="organism name" value="human"/>
</dbReference>
<dbReference type="GeneWiki" id="ATRN"/>
<dbReference type="GenomeRNAi" id="8455"/>
<dbReference type="Pharos" id="O75882">
    <property type="development level" value="Tbio"/>
</dbReference>
<dbReference type="PRO" id="PR:O75882"/>
<dbReference type="Proteomes" id="UP000005640">
    <property type="component" value="Chromosome 20"/>
</dbReference>
<dbReference type="RNAct" id="O75882">
    <property type="molecule type" value="protein"/>
</dbReference>
<dbReference type="Bgee" id="ENSG00000088812">
    <property type="expression patterns" value="Expressed in duodenum and 216 other cell types or tissues"/>
</dbReference>
<dbReference type="GO" id="GO:0070062">
    <property type="term" value="C:extracellular exosome"/>
    <property type="evidence" value="ECO:0007005"/>
    <property type="project" value="UniProtKB"/>
</dbReference>
<dbReference type="GO" id="GO:0005615">
    <property type="term" value="C:extracellular space"/>
    <property type="evidence" value="ECO:0007005"/>
    <property type="project" value="UniProtKB"/>
</dbReference>
<dbReference type="GO" id="GO:0005794">
    <property type="term" value="C:Golgi apparatus"/>
    <property type="evidence" value="ECO:0000318"/>
    <property type="project" value="GO_Central"/>
</dbReference>
<dbReference type="GO" id="GO:0005886">
    <property type="term" value="C:plasma membrane"/>
    <property type="evidence" value="ECO:0000304"/>
    <property type="project" value="ProtInc"/>
</dbReference>
<dbReference type="GO" id="GO:0030246">
    <property type="term" value="F:carbohydrate binding"/>
    <property type="evidence" value="ECO:0007669"/>
    <property type="project" value="UniProtKB-KW"/>
</dbReference>
<dbReference type="GO" id="GO:0038023">
    <property type="term" value="F:signaling receptor activity"/>
    <property type="evidence" value="ECO:0000304"/>
    <property type="project" value="ProtInc"/>
</dbReference>
<dbReference type="GO" id="GO:0021549">
    <property type="term" value="P:cerebellum development"/>
    <property type="evidence" value="ECO:0007669"/>
    <property type="project" value="Ensembl"/>
</dbReference>
<dbReference type="GO" id="GO:0006954">
    <property type="term" value="P:inflammatory response"/>
    <property type="evidence" value="ECO:0007669"/>
    <property type="project" value="UniProtKB-KW"/>
</dbReference>
<dbReference type="GO" id="GO:0042552">
    <property type="term" value="P:myelination"/>
    <property type="evidence" value="ECO:0007669"/>
    <property type="project" value="Ensembl"/>
</dbReference>
<dbReference type="GO" id="GO:0043473">
    <property type="term" value="P:pigmentation"/>
    <property type="evidence" value="ECO:0007669"/>
    <property type="project" value="Ensembl"/>
</dbReference>
<dbReference type="GO" id="GO:0040014">
    <property type="term" value="P:regulation of multicellular organism growth"/>
    <property type="evidence" value="ECO:0007669"/>
    <property type="project" value="Ensembl"/>
</dbReference>
<dbReference type="CDD" id="cd03597">
    <property type="entry name" value="CLECT_attractin_like"/>
    <property type="match status" value="1"/>
</dbReference>
<dbReference type="CDD" id="cd00041">
    <property type="entry name" value="CUB"/>
    <property type="match status" value="1"/>
</dbReference>
<dbReference type="CDD" id="cd00055">
    <property type="entry name" value="EGF_Lam"/>
    <property type="match status" value="3"/>
</dbReference>
<dbReference type="FunFam" id="2.120.10.80:FF:000034">
    <property type="entry name" value="Attractin"/>
    <property type="match status" value="1"/>
</dbReference>
<dbReference type="FunFam" id="3.10.100.10:FF:000012">
    <property type="entry name" value="Attractin"/>
    <property type="match status" value="1"/>
</dbReference>
<dbReference type="FunFam" id="2.120.10.80:FF:000031">
    <property type="entry name" value="attractin"/>
    <property type="match status" value="1"/>
</dbReference>
<dbReference type="FunFam" id="2.10.25.10:FF:000079">
    <property type="entry name" value="Attractin like 1"/>
    <property type="match status" value="1"/>
</dbReference>
<dbReference type="FunFam" id="2.10.25.10:FF:000164">
    <property type="entry name" value="Attractin like 1"/>
    <property type="match status" value="1"/>
</dbReference>
<dbReference type="FunFam" id="2.60.120.290:FF:000008">
    <property type="entry name" value="Attractin like 1"/>
    <property type="match status" value="1"/>
</dbReference>
<dbReference type="Gene3D" id="2.120.10.80">
    <property type="entry name" value="Kelch-type beta propeller"/>
    <property type="match status" value="2"/>
</dbReference>
<dbReference type="Gene3D" id="2.10.25.10">
    <property type="entry name" value="Laminin"/>
    <property type="match status" value="2"/>
</dbReference>
<dbReference type="Gene3D" id="3.10.100.10">
    <property type="entry name" value="Mannose-Binding Protein A, subunit A"/>
    <property type="match status" value="1"/>
</dbReference>
<dbReference type="Gene3D" id="2.60.120.290">
    <property type="entry name" value="Spermadhesin, CUB domain"/>
    <property type="match status" value="1"/>
</dbReference>
<dbReference type="InterPro" id="IPR034011">
    <property type="entry name" value="Attractin-like_CTLD"/>
</dbReference>
<dbReference type="InterPro" id="IPR056737">
    <property type="entry name" value="Beta-prop_ATRN-MKLN-like"/>
</dbReference>
<dbReference type="InterPro" id="IPR001304">
    <property type="entry name" value="C-type_lectin-like"/>
</dbReference>
<dbReference type="InterPro" id="IPR016186">
    <property type="entry name" value="C-type_lectin-like/link_sf"/>
</dbReference>
<dbReference type="InterPro" id="IPR016187">
    <property type="entry name" value="CTDL_fold"/>
</dbReference>
<dbReference type="InterPro" id="IPR000859">
    <property type="entry name" value="CUB_dom"/>
</dbReference>
<dbReference type="InterPro" id="IPR000742">
    <property type="entry name" value="EGF-like_dom"/>
</dbReference>
<dbReference type="InterPro" id="IPR011043">
    <property type="entry name" value="Gal_Oxase/kelch_b-propeller"/>
</dbReference>
<dbReference type="InterPro" id="IPR056732">
    <property type="entry name" value="GBD_ATRN"/>
</dbReference>
<dbReference type="InterPro" id="IPR015915">
    <property type="entry name" value="Kelch-typ_b-propeller"/>
</dbReference>
<dbReference type="InterPro" id="IPR002049">
    <property type="entry name" value="LE_dom"/>
</dbReference>
<dbReference type="InterPro" id="IPR056863">
    <property type="entry name" value="LMN_ATRN_NET-like_EGF"/>
</dbReference>
<dbReference type="InterPro" id="IPR051568">
    <property type="entry name" value="LZTR1/Attractin"/>
</dbReference>
<dbReference type="InterPro" id="IPR002165">
    <property type="entry name" value="Plexin_repeat"/>
</dbReference>
<dbReference type="InterPro" id="IPR016201">
    <property type="entry name" value="PSI"/>
</dbReference>
<dbReference type="InterPro" id="IPR035914">
    <property type="entry name" value="Sperma_CUB_dom_sf"/>
</dbReference>
<dbReference type="PANTHER" id="PTHR46376:SF3">
    <property type="entry name" value="ATTRACTIN"/>
    <property type="match status" value="1"/>
</dbReference>
<dbReference type="PANTHER" id="PTHR46376">
    <property type="entry name" value="LEUCINE-ZIPPER-LIKE TRANSCRIPTIONAL REGULATOR 1"/>
    <property type="match status" value="1"/>
</dbReference>
<dbReference type="Pfam" id="PF24981">
    <property type="entry name" value="Beta-prop_ATRN-LZTR1"/>
    <property type="match status" value="1"/>
</dbReference>
<dbReference type="Pfam" id="PF00431">
    <property type="entry name" value="CUB"/>
    <property type="match status" value="1"/>
</dbReference>
<dbReference type="Pfam" id="PF24973">
    <property type="entry name" value="EGF_LMN_ATRN"/>
    <property type="match status" value="1"/>
</dbReference>
<dbReference type="Pfam" id="PF23106">
    <property type="entry name" value="EGF_Teneurin"/>
    <property type="match status" value="1"/>
</dbReference>
<dbReference type="Pfam" id="PF24972">
    <property type="entry name" value="GBD_ATRN"/>
    <property type="match status" value="1"/>
</dbReference>
<dbReference type="Pfam" id="PF01437">
    <property type="entry name" value="PSI"/>
    <property type="match status" value="2"/>
</dbReference>
<dbReference type="SMART" id="SM00034">
    <property type="entry name" value="CLECT"/>
    <property type="match status" value="1"/>
</dbReference>
<dbReference type="SMART" id="SM00042">
    <property type="entry name" value="CUB"/>
    <property type="match status" value="1"/>
</dbReference>
<dbReference type="SMART" id="SM00181">
    <property type="entry name" value="EGF"/>
    <property type="match status" value="2"/>
</dbReference>
<dbReference type="SMART" id="SM00180">
    <property type="entry name" value="EGF_Lam"/>
    <property type="match status" value="2"/>
</dbReference>
<dbReference type="SMART" id="SM00423">
    <property type="entry name" value="PSI"/>
    <property type="match status" value="5"/>
</dbReference>
<dbReference type="SUPFAM" id="SSF56436">
    <property type="entry name" value="C-type lectin-like"/>
    <property type="match status" value="1"/>
</dbReference>
<dbReference type="SUPFAM" id="SSF57196">
    <property type="entry name" value="EGF/Laminin"/>
    <property type="match status" value="1"/>
</dbReference>
<dbReference type="SUPFAM" id="SSF50965">
    <property type="entry name" value="Galactose oxidase, central domain"/>
    <property type="match status" value="1"/>
</dbReference>
<dbReference type="SUPFAM" id="SSF49854">
    <property type="entry name" value="Spermadhesin, CUB domain"/>
    <property type="match status" value="1"/>
</dbReference>
<dbReference type="PROSITE" id="PS50041">
    <property type="entry name" value="C_TYPE_LECTIN_2"/>
    <property type="match status" value="1"/>
</dbReference>
<dbReference type="PROSITE" id="PS01180">
    <property type="entry name" value="CUB"/>
    <property type="match status" value="1"/>
</dbReference>
<dbReference type="PROSITE" id="PS00022">
    <property type="entry name" value="EGF_1"/>
    <property type="match status" value="3"/>
</dbReference>
<dbReference type="PROSITE" id="PS01186">
    <property type="entry name" value="EGF_2"/>
    <property type="match status" value="1"/>
</dbReference>
<dbReference type="PROSITE" id="PS50026">
    <property type="entry name" value="EGF_3"/>
    <property type="match status" value="2"/>
</dbReference>
<dbReference type="PROSITE" id="PS01248">
    <property type="entry name" value="EGF_LAM_1"/>
    <property type="match status" value="1"/>
</dbReference>
<dbReference type="PROSITE" id="PS50027">
    <property type="entry name" value="EGF_LAM_2"/>
    <property type="match status" value="3"/>
</dbReference>